<feature type="chain" id="PRO_1000056920" description="Malate synthase G">
    <location>
        <begin position="1"/>
        <end position="725"/>
    </location>
</feature>
<feature type="active site" description="Proton acceptor" evidence="1">
    <location>
        <position position="340"/>
    </location>
</feature>
<feature type="active site" description="Proton donor" evidence="1">
    <location>
        <position position="631"/>
    </location>
</feature>
<feature type="binding site" evidence="1">
    <location>
        <position position="118"/>
    </location>
    <ligand>
        <name>acetyl-CoA</name>
        <dbReference type="ChEBI" id="CHEBI:57288"/>
    </ligand>
</feature>
<feature type="binding site" evidence="1">
    <location>
        <begin position="125"/>
        <end position="126"/>
    </location>
    <ligand>
        <name>acetyl-CoA</name>
        <dbReference type="ChEBI" id="CHEBI:57288"/>
    </ligand>
</feature>
<feature type="binding site" evidence="1">
    <location>
        <position position="276"/>
    </location>
    <ligand>
        <name>acetyl-CoA</name>
        <dbReference type="ChEBI" id="CHEBI:57288"/>
    </ligand>
</feature>
<feature type="binding site" evidence="1">
    <location>
        <position position="313"/>
    </location>
    <ligand>
        <name>acetyl-CoA</name>
        <dbReference type="ChEBI" id="CHEBI:57288"/>
    </ligand>
</feature>
<feature type="binding site" evidence="1">
    <location>
        <position position="340"/>
    </location>
    <ligand>
        <name>glyoxylate</name>
        <dbReference type="ChEBI" id="CHEBI:36655"/>
    </ligand>
</feature>
<feature type="binding site" evidence="1">
    <location>
        <position position="432"/>
    </location>
    <ligand>
        <name>glyoxylate</name>
        <dbReference type="ChEBI" id="CHEBI:36655"/>
    </ligand>
</feature>
<feature type="binding site" evidence="1">
    <location>
        <position position="432"/>
    </location>
    <ligand>
        <name>Mg(2+)</name>
        <dbReference type="ChEBI" id="CHEBI:18420"/>
    </ligand>
</feature>
<feature type="binding site" evidence="1">
    <location>
        <begin position="457"/>
        <end position="460"/>
    </location>
    <ligand>
        <name>glyoxylate</name>
        <dbReference type="ChEBI" id="CHEBI:36655"/>
    </ligand>
</feature>
<feature type="binding site" evidence="1">
    <location>
        <position position="460"/>
    </location>
    <ligand>
        <name>Mg(2+)</name>
        <dbReference type="ChEBI" id="CHEBI:18420"/>
    </ligand>
</feature>
<feature type="binding site" evidence="1">
    <location>
        <position position="541"/>
    </location>
    <ligand>
        <name>acetyl-CoA</name>
        <dbReference type="ChEBI" id="CHEBI:57288"/>
    </ligand>
</feature>
<feature type="modified residue" description="Cysteine sulfenic acid (-SOH)" evidence="1">
    <location>
        <position position="617"/>
    </location>
</feature>
<keyword id="KW-0963">Cytoplasm</keyword>
<keyword id="KW-0329">Glyoxylate bypass</keyword>
<keyword id="KW-0460">Magnesium</keyword>
<keyword id="KW-0479">Metal-binding</keyword>
<keyword id="KW-0558">Oxidation</keyword>
<keyword id="KW-0808">Transferase</keyword>
<keyword id="KW-0816">Tricarboxylic acid cycle</keyword>
<reference key="1">
    <citation type="journal article" date="2009" name="Genome Biol.">
        <title>Genomic and genetic analyses of diversity and plant interactions of Pseudomonas fluorescens.</title>
        <authorList>
            <person name="Silby M.W."/>
            <person name="Cerdeno-Tarraga A.M."/>
            <person name="Vernikos G.S."/>
            <person name="Giddens S.R."/>
            <person name="Jackson R.W."/>
            <person name="Preston G.M."/>
            <person name="Zhang X.-X."/>
            <person name="Moon C.D."/>
            <person name="Gehrig S.M."/>
            <person name="Godfrey S.A.C."/>
            <person name="Knight C.G."/>
            <person name="Malone J.G."/>
            <person name="Robinson Z."/>
            <person name="Spiers A.J."/>
            <person name="Harris S."/>
            <person name="Challis G.L."/>
            <person name="Yaxley A.M."/>
            <person name="Harris D."/>
            <person name="Seeger K."/>
            <person name="Murphy L."/>
            <person name="Rutter S."/>
            <person name="Squares R."/>
            <person name="Quail M.A."/>
            <person name="Saunders E."/>
            <person name="Mavromatis K."/>
            <person name="Brettin T.S."/>
            <person name="Bentley S.D."/>
            <person name="Hothersall J."/>
            <person name="Stephens E."/>
            <person name="Thomas C.M."/>
            <person name="Parkhill J."/>
            <person name="Levy S.B."/>
            <person name="Rainey P.B."/>
            <person name="Thomson N.R."/>
        </authorList>
    </citation>
    <scope>NUCLEOTIDE SEQUENCE [LARGE SCALE GENOMIC DNA]</scope>
    <source>
        <strain>Pf0-1</strain>
    </source>
</reference>
<protein>
    <recommendedName>
        <fullName evidence="1">Malate synthase G</fullName>
        <ecNumber evidence="1">2.3.3.9</ecNumber>
    </recommendedName>
</protein>
<accession>Q3K5N4</accession>
<dbReference type="EC" id="2.3.3.9" evidence="1"/>
<dbReference type="EMBL" id="CP000094">
    <property type="protein sequence ID" value="ABA76920.1"/>
    <property type="molecule type" value="Genomic_DNA"/>
</dbReference>
<dbReference type="RefSeq" id="WP_011336251.1">
    <property type="nucleotide sequence ID" value="NC_007492.2"/>
</dbReference>
<dbReference type="SMR" id="Q3K5N4"/>
<dbReference type="KEGG" id="pfo:Pfl01_5183"/>
<dbReference type="eggNOG" id="COG2225">
    <property type="taxonomic scope" value="Bacteria"/>
</dbReference>
<dbReference type="HOGENOM" id="CLU_028446_1_0_6"/>
<dbReference type="UniPathway" id="UPA00703">
    <property type="reaction ID" value="UER00720"/>
</dbReference>
<dbReference type="Proteomes" id="UP000002704">
    <property type="component" value="Chromosome"/>
</dbReference>
<dbReference type="GO" id="GO:0005829">
    <property type="term" value="C:cytosol"/>
    <property type="evidence" value="ECO:0007669"/>
    <property type="project" value="TreeGrafter"/>
</dbReference>
<dbReference type="GO" id="GO:0000287">
    <property type="term" value="F:magnesium ion binding"/>
    <property type="evidence" value="ECO:0007669"/>
    <property type="project" value="TreeGrafter"/>
</dbReference>
<dbReference type="GO" id="GO:0004474">
    <property type="term" value="F:malate synthase activity"/>
    <property type="evidence" value="ECO:0007669"/>
    <property type="project" value="UniProtKB-UniRule"/>
</dbReference>
<dbReference type="GO" id="GO:0009436">
    <property type="term" value="P:glyoxylate catabolic process"/>
    <property type="evidence" value="ECO:0007669"/>
    <property type="project" value="TreeGrafter"/>
</dbReference>
<dbReference type="GO" id="GO:0006097">
    <property type="term" value="P:glyoxylate cycle"/>
    <property type="evidence" value="ECO:0007669"/>
    <property type="project" value="UniProtKB-UniRule"/>
</dbReference>
<dbReference type="GO" id="GO:0006099">
    <property type="term" value="P:tricarboxylic acid cycle"/>
    <property type="evidence" value="ECO:0007669"/>
    <property type="project" value="UniProtKB-KW"/>
</dbReference>
<dbReference type="CDD" id="cd00728">
    <property type="entry name" value="malate_synt_G"/>
    <property type="match status" value="1"/>
</dbReference>
<dbReference type="FunFam" id="3.20.20.360:FF:000002">
    <property type="entry name" value="Malate synthase G"/>
    <property type="match status" value="1"/>
</dbReference>
<dbReference type="Gene3D" id="3.20.20.360">
    <property type="entry name" value="Malate synthase, domain 3"/>
    <property type="match status" value="2"/>
</dbReference>
<dbReference type="Gene3D" id="1.20.1220.12">
    <property type="entry name" value="Malate synthase, domain III"/>
    <property type="match status" value="1"/>
</dbReference>
<dbReference type="HAMAP" id="MF_00641">
    <property type="entry name" value="Malate_synth_G"/>
    <property type="match status" value="1"/>
</dbReference>
<dbReference type="InterPro" id="IPR044856">
    <property type="entry name" value="Malate_synth_C_sf"/>
</dbReference>
<dbReference type="InterPro" id="IPR011076">
    <property type="entry name" value="Malate_synth_sf"/>
</dbReference>
<dbReference type="InterPro" id="IPR001465">
    <property type="entry name" value="Malate_synthase_TIM"/>
</dbReference>
<dbReference type="InterPro" id="IPR006253">
    <property type="entry name" value="Malate_synthG"/>
</dbReference>
<dbReference type="InterPro" id="IPR048355">
    <property type="entry name" value="MS_C"/>
</dbReference>
<dbReference type="InterPro" id="IPR048356">
    <property type="entry name" value="MS_N"/>
</dbReference>
<dbReference type="InterPro" id="IPR046363">
    <property type="entry name" value="MS_N_TIM-barrel_dom"/>
</dbReference>
<dbReference type="InterPro" id="IPR048357">
    <property type="entry name" value="MSG_insertion"/>
</dbReference>
<dbReference type="NCBIfam" id="TIGR01345">
    <property type="entry name" value="malate_syn_G"/>
    <property type="match status" value="1"/>
</dbReference>
<dbReference type="NCBIfam" id="NF002825">
    <property type="entry name" value="PRK02999.1"/>
    <property type="match status" value="1"/>
</dbReference>
<dbReference type="PANTHER" id="PTHR42739">
    <property type="entry name" value="MALATE SYNTHASE G"/>
    <property type="match status" value="1"/>
</dbReference>
<dbReference type="PANTHER" id="PTHR42739:SF1">
    <property type="entry name" value="MALATE SYNTHASE G"/>
    <property type="match status" value="1"/>
</dbReference>
<dbReference type="Pfam" id="PF20659">
    <property type="entry name" value="MS_C"/>
    <property type="match status" value="1"/>
</dbReference>
<dbReference type="Pfam" id="PF20656">
    <property type="entry name" value="MS_N"/>
    <property type="match status" value="1"/>
</dbReference>
<dbReference type="Pfam" id="PF01274">
    <property type="entry name" value="MS_TIM-barrel"/>
    <property type="match status" value="1"/>
</dbReference>
<dbReference type="Pfam" id="PF20658">
    <property type="entry name" value="MSG_insertion"/>
    <property type="match status" value="1"/>
</dbReference>
<dbReference type="SUPFAM" id="SSF51645">
    <property type="entry name" value="Malate synthase G"/>
    <property type="match status" value="1"/>
</dbReference>
<name>MASZ_PSEPF</name>
<proteinExistence type="inferred from homology"/>
<evidence type="ECO:0000255" key="1">
    <source>
        <dbReference type="HAMAP-Rule" id="MF_00641"/>
    </source>
</evidence>
<sequence>MTEHVQVGGLQVAKVLFDFVNNEAIPGTGLTADKFWEGADKVIHDLAPKNKALLAKRDDFQARIDGWHQSRAGQPHDAVAYKAFLQEIGYLLPEAADFQATTQNVDDEIARTAGPQLVVPVMNARFALNASNARWGSLYDALYGTDAISEAGGAEKGKGYNKVRGDKVIAFARAFLDEAAPLATGSHVDSTGYKIADGKLVVTLKGGSTSGLRNDAQLIGFQGDANAPIAILLKNNGLHFEIQIDASTPVGQTDAAGVKDILMEAALTTIMDCEDSVAAVDADDKVVIYRNWLGLMKGDLAESVSKGGQTFTRTMNPDRTYTKVDGSELTLHGRSLLFVRNVGHLMTIDAILDKHGNEVPEGILDGLVTCLAAMHNLSGNTSRKNTRTGSVYIVKPKMHGPEEAAFTNELFGRIEDVLGLKRNTLKVGIMDEERRTTVNLKACIQAASERVVFINTGFLDRTGDEIHTSMEAGPMVRKADMKAEKWIGAYENWNVDIGLSTGLQGRAQIGKGMWAMPDLMAAMLEQKIAHPLAGANTAWVPSPTAAALHALHYHKVDVFARQAELAKRARASVDDILTIPLAVNPNWTPEQIKNELDNNAQGILGYVVRWIDQGVGCSKVPDINDVGLMEDRATLRISSQHIANWLRHGVVTEAQVMESLKRMAPVVDRQNANDPLYRPLAPNFDSNIAFQAAVELVIEGTKQPNGYTEPVLHRRRREFKAANGL</sequence>
<organism>
    <name type="scientific">Pseudomonas fluorescens (strain Pf0-1)</name>
    <dbReference type="NCBI Taxonomy" id="205922"/>
    <lineage>
        <taxon>Bacteria</taxon>
        <taxon>Pseudomonadati</taxon>
        <taxon>Pseudomonadota</taxon>
        <taxon>Gammaproteobacteria</taxon>
        <taxon>Pseudomonadales</taxon>
        <taxon>Pseudomonadaceae</taxon>
        <taxon>Pseudomonas</taxon>
    </lineage>
</organism>
<comment type="function">
    <text evidence="1">Involved in the glycolate utilization. Catalyzes the condensation and subsequent hydrolysis of acetyl-coenzyme A (acetyl-CoA) and glyoxylate to form malate and CoA.</text>
</comment>
<comment type="catalytic activity">
    <reaction evidence="1">
        <text>glyoxylate + acetyl-CoA + H2O = (S)-malate + CoA + H(+)</text>
        <dbReference type="Rhea" id="RHEA:18181"/>
        <dbReference type="ChEBI" id="CHEBI:15377"/>
        <dbReference type="ChEBI" id="CHEBI:15378"/>
        <dbReference type="ChEBI" id="CHEBI:15589"/>
        <dbReference type="ChEBI" id="CHEBI:36655"/>
        <dbReference type="ChEBI" id="CHEBI:57287"/>
        <dbReference type="ChEBI" id="CHEBI:57288"/>
        <dbReference type="EC" id="2.3.3.9"/>
    </reaction>
</comment>
<comment type="cofactor">
    <cofactor evidence="1">
        <name>Mg(2+)</name>
        <dbReference type="ChEBI" id="CHEBI:18420"/>
    </cofactor>
</comment>
<comment type="pathway">
    <text evidence="1">Carbohydrate metabolism; glyoxylate cycle; (S)-malate from isocitrate: step 2/2.</text>
</comment>
<comment type="subunit">
    <text evidence="1">Monomer.</text>
</comment>
<comment type="subcellular location">
    <subcellularLocation>
        <location evidence="1">Cytoplasm</location>
    </subcellularLocation>
</comment>
<comment type="similarity">
    <text evidence="1">Belongs to the malate synthase family. GlcB subfamily.</text>
</comment>
<gene>
    <name evidence="1" type="primary">glcB</name>
    <name type="ordered locus">Pfl01_5183</name>
</gene>